<gene>
    <name type="primary">cpna-5</name>
    <name type="synonym">tag-178</name>
    <name type="ORF">B0495.10</name>
</gene>
<sequence length="717" mass="81583">MTNSAMALPPTRINRRRSTKALHDFFSRPFTQRRSQSIAGVRVSPRISVTPSCTSSKHAMSNTIEISITIHDFATTETATQITCELYDNETECEDKWSKVGTSSPHRFSRNIVFTDKFSYQYVFEKTQLIKAVFSRCHDRDKPSSSSRDILATSIFKVDELIGSFGLQLRRQLEKNGNIASALSGTQRVTDEYLGGIIVSAEMPEKEQPIVVQFHGKSLDRKDFLWDETAVFFRVFRLEEGKDDDSLVFLYESEALKNHSHPQWAEFRLDTQDAADNRNRLLEIWVMYKDVDGKEGYIGKFLTTYAKMKYGPGSDNVYSVINDVKKAQKKSYENSGKMELVKFTDVSFYSFLDYIVSGTQLHFEIGVDFSSPEPVHELDQRRFDGELHMAIRAIGSIIRDYTPNRLFAAFGIGAKIPPTFHESNEFFLNFSMDPICRGLDGVMEAYRKTQTMVTPLKESKLSPVINYVTRMSHRSGFRGLHYHVLALFTRGEVTDLKEIQQALNSASDAPLSILIIGMGDFDFSSLQKLCSKRKDGRRDVVQFIHLKSLLNGAEAPWLNKSRIAETALRHVPQHMVQYMHNANIAAKPPIQVCRSPLFHSSSLIPDKPTEFDFDLANKRPSVGIEIPSLMPNLILPPDLSPRPRQDRRGSDTQYLDVEIMRGSLTVRVPERCHSVLQTSREQYQRRLKERGLARMKFPRVELSTLESSGGSTQDSSL</sequence>
<reference key="1">
    <citation type="journal article" date="1998" name="Science">
        <title>Genome sequence of the nematode C. elegans: a platform for investigating biology.</title>
        <authorList>
            <consortium name="The C. elegans sequencing consortium"/>
        </authorList>
    </citation>
    <scope>NUCLEOTIDE SEQUENCE [LARGE SCALE GENOMIC DNA]</scope>
    <scope>ALTERNATIVE SPLICING</scope>
    <source>
        <strain>Bristol N2</strain>
    </source>
</reference>
<name>CPNA5_CAEEL</name>
<dbReference type="EMBL" id="FO080132">
    <property type="protein sequence ID" value="CCD61480.1"/>
    <property type="molecule type" value="Genomic_DNA"/>
</dbReference>
<dbReference type="EMBL" id="FO080132">
    <property type="protein sequence ID" value="CCD61481.1"/>
    <property type="molecule type" value="Genomic_DNA"/>
</dbReference>
<dbReference type="EMBL" id="FO080132">
    <property type="protein sequence ID" value="CCD61479.1"/>
    <property type="molecule type" value="Genomic_DNA"/>
</dbReference>
<dbReference type="PIR" id="H88216">
    <property type="entry name" value="H88216"/>
</dbReference>
<dbReference type="RefSeq" id="NP_001367323.1">
    <molecule id="Q09219-3"/>
    <property type="nucleotide sequence ID" value="NM_001381505.2"/>
</dbReference>
<dbReference type="RefSeq" id="NP_495622.2">
    <molecule id="Q09219-1"/>
    <property type="nucleotide sequence ID" value="NM_063221.5"/>
</dbReference>
<dbReference type="RefSeq" id="NP_871897.2">
    <molecule id="Q09219-2"/>
    <property type="nucleotide sequence ID" value="NM_182097.6"/>
</dbReference>
<dbReference type="RefSeq" id="NP_871898.2">
    <property type="nucleotide sequence ID" value="NM_182098.4"/>
</dbReference>
<dbReference type="SMR" id="Q09219"/>
<dbReference type="BioGRID" id="39582">
    <property type="interactions" value="1"/>
</dbReference>
<dbReference type="FunCoup" id="Q09219">
    <property type="interactions" value="200"/>
</dbReference>
<dbReference type="STRING" id="6239.B0495.10a.2"/>
<dbReference type="PaxDb" id="6239-B0495.10a"/>
<dbReference type="EnsemblMetazoa" id="B0495.10a.1">
    <molecule id="Q09219-1"/>
    <property type="protein sequence ID" value="B0495.10a.1"/>
    <property type="gene ID" value="WBGene00007044"/>
</dbReference>
<dbReference type="EnsemblMetazoa" id="B0495.10b.1">
    <molecule id="Q09219-2"/>
    <property type="protein sequence ID" value="B0495.10b.1"/>
    <property type="gene ID" value="WBGene00007044"/>
</dbReference>
<dbReference type="EnsemblMetazoa" id="B0495.10c.1">
    <molecule id="Q09219-3"/>
    <property type="protein sequence ID" value="B0495.10c.1"/>
    <property type="gene ID" value="WBGene00007044"/>
</dbReference>
<dbReference type="GeneID" id="174248"/>
<dbReference type="KEGG" id="cel:CELE_B0495.10"/>
<dbReference type="UCSC" id="B0495.10a">
    <property type="organism name" value="c. elegans"/>
</dbReference>
<dbReference type="AGR" id="WB:WBGene00007044"/>
<dbReference type="CTD" id="174248"/>
<dbReference type="WormBase" id="B0495.10a">
    <molecule id="Q09219-1"/>
    <property type="protein sequence ID" value="CE42047"/>
    <property type="gene ID" value="WBGene00007044"/>
    <property type="gene designation" value="cpna-5"/>
</dbReference>
<dbReference type="WormBase" id="B0495.10b">
    <molecule id="Q09219-2"/>
    <property type="protein sequence ID" value="CE33022"/>
    <property type="gene ID" value="WBGene00007044"/>
    <property type="gene designation" value="cpna-5"/>
</dbReference>
<dbReference type="WormBase" id="B0495.10c">
    <molecule id="Q09219-3"/>
    <property type="protein sequence ID" value="CE42048"/>
    <property type="gene ID" value="WBGene00007044"/>
    <property type="gene designation" value="cpna-5"/>
</dbReference>
<dbReference type="eggNOG" id="KOG1327">
    <property type="taxonomic scope" value="Eukaryota"/>
</dbReference>
<dbReference type="InParanoid" id="Q09219"/>
<dbReference type="OMA" id="RDYTPNR"/>
<dbReference type="OrthoDB" id="5855668at2759"/>
<dbReference type="PhylomeDB" id="Q09219"/>
<dbReference type="PRO" id="PR:Q09219"/>
<dbReference type="Proteomes" id="UP000001940">
    <property type="component" value="Chromosome II"/>
</dbReference>
<dbReference type="Bgee" id="WBGene00007044">
    <property type="expression patterns" value="Expressed in pharyngeal muscle cell (C elegans) and 3 other cell types or tissues"/>
</dbReference>
<dbReference type="GO" id="GO:0005886">
    <property type="term" value="C:plasma membrane"/>
    <property type="evidence" value="ECO:0000318"/>
    <property type="project" value="GO_Central"/>
</dbReference>
<dbReference type="GO" id="GO:0005544">
    <property type="term" value="F:calcium-dependent phospholipid binding"/>
    <property type="evidence" value="ECO:0000318"/>
    <property type="project" value="GO_Central"/>
</dbReference>
<dbReference type="GO" id="GO:0071277">
    <property type="term" value="P:cellular response to calcium ion"/>
    <property type="evidence" value="ECO:0000318"/>
    <property type="project" value="GO_Central"/>
</dbReference>
<dbReference type="CDD" id="cd04047">
    <property type="entry name" value="C2B_Copine"/>
    <property type="match status" value="1"/>
</dbReference>
<dbReference type="InterPro" id="IPR000008">
    <property type="entry name" value="C2_dom"/>
</dbReference>
<dbReference type="InterPro" id="IPR037768">
    <property type="entry name" value="C2B_Copine"/>
</dbReference>
<dbReference type="InterPro" id="IPR045052">
    <property type="entry name" value="Copine"/>
</dbReference>
<dbReference type="InterPro" id="IPR010734">
    <property type="entry name" value="Copine_C"/>
</dbReference>
<dbReference type="InterPro" id="IPR036465">
    <property type="entry name" value="vWFA_dom_sf"/>
</dbReference>
<dbReference type="PANTHER" id="PTHR10857">
    <property type="entry name" value="COPINE"/>
    <property type="match status" value="1"/>
</dbReference>
<dbReference type="PANTHER" id="PTHR10857:SF101">
    <property type="entry name" value="COPINE FAMILY PROTEIN 5"/>
    <property type="match status" value="1"/>
</dbReference>
<dbReference type="Pfam" id="PF07002">
    <property type="entry name" value="Copine"/>
    <property type="match status" value="1"/>
</dbReference>
<dbReference type="SUPFAM" id="SSF53300">
    <property type="entry name" value="vWA-like"/>
    <property type="match status" value="1"/>
</dbReference>
<dbReference type="PROSITE" id="PS50004">
    <property type="entry name" value="C2"/>
    <property type="match status" value="1"/>
</dbReference>
<feature type="chain" id="PRO_0000065091" description="Copine family protein 5">
    <location>
        <begin position="1"/>
        <end position="717"/>
    </location>
</feature>
<feature type="domain" description="C2" evidence="1">
    <location>
        <begin position="193"/>
        <end position="318"/>
    </location>
</feature>
<feature type="domain" description="VWFA">
    <location>
        <begin position="377"/>
        <end position="567"/>
    </location>
</feature>
<feature type="splice variant" id="VSP_041565" description="In isoform b." evidence="2">
    <location>
        <begin position="1"/>
        <end position="59"/>
    </location>
</feature>
<feature type="splice variant" id="VSP_041566" description="In isoform c." evidence="2">
    <original>QYLDVEIMR</original>
    <variation>RMSLNTVYY</variation>
    <location>
        <begin position="653"/>
        <end position="661"/>
    </location>
</feature>
<feature type="splice variant" id="VSP_041567" description="In isoform c." evidence="2">
    <location>
        <begin position="662"/>
        <end position="717"/>
    </location>
</feature>
<feature type="splice variant" id="VSP_041568" description="In isoform b." evidence="2">
    <original>MKFPRVELSTLESSGGSTQDSSL</original>
    <variation>VCFFFQIITPISEIPSS</variation>
    <location>
        <begin position="695"/>
        <end position="717"/>
    </location>
</feature>
<proteinExistence type="inferred from homology"/>
<keyword id="KW-0025">Alternative splicing</keyword>
<keyword id="KW-1185">Reference proteome</keyword>
<protein>
    <recommendedName>
        <fullName>Copine family protein 5</fullName>
    </recommendedName>
</protein>
<evidence type="ECO:0000255" key="1">
    <source>
        <dbReference type="PROSITE-ProRule" id="PRU00041"/>
    </source>
</evidence>
<evidence type="ECO:0000305" key="2"/>
<organism>
    <name type="scientific">Caenorhabditis elegans</name>
    <dbReference type="NCBI Taxonomy" id="6239"/>
    <lineage>
        <taxon>Eukaryota</taxon>
        <taxon>Metazoa</taxon>
        <taxon>Ecdysozoa</taxon>
        <taxon>Nematoda</taxon>
        <taxon>Chromadorea</taxon>
        <taxon>Rhabditida</taxon>
        <taxon>Rhabditina</taxon>
        <taxon>Rhabditomorpha</taxon>
        <taxon>Rhabditoidea</taxon>
        <taxon>Rhabditidae</taxon>
        <taxon>Peloderinae</taxon>
        <taxon>Caenorhabditis</taxon>
    </lineage>
</organism>
<accession>Q09219</accession>
<accession>B0M0L5</accession>
<accession>B0M0L6</accession>
<accession>B0M0L7</accession>
<comment type="alternative products">
    <event type="alternative splicing"/>
    <isoform>
        <id>Q09219-1</id>
        <name>a</name>
        <sequence type="displayed"/>
    </isoform>
    <isoform>
        <id>Q09219-2</id>
        <name>b</name>
        <sequence type="described" ref="VSP_041565 VSP_041568"/>
    </isoform>
    <isoform>
        <id>Q09219-3</id>
        <name>c</name>
        <sequence type="described" ref="VSP_041566 VSP_041567"/>
    </isoform>
</comment>
<comment type="similarity">
    <text evidence="2">Belongs to the copine family.</text>
</comment>